<organism>
    <name type="scientific">Escherichia coli (strain K12)</name>
    <dbReference type="NCBI Taxonomy" id="83333"/>
    <lineage>
        <taxon>Bacteria</taxon>
        <taxon>Pseudomonadati</taxon>
        <taxon>Pseudomonadota</taxon>
        <taxon>Gammaproteobacteria</taxon>
        <taxon>Enterobacterales</taxon>
        <taxon>Enterobacteriaceae</taxon>
        <taxon>Escherichia</taxon>
    </lineage>
</organism>
<reference key="1">
    <citation type="journal article" date="1996" name="DNA Res.">
        <title>A 460-kb DNA sequence of the Escherichia coli K-12 genome corresponding to the 40.1-50.0 min region on the linkage map.</title>
        <authorList>
            <person name="Itoh T."/>
            <person name="Aiba H."/>
            <person name="Baba T."/>
            <person name="Fujita K."/>
            <person name="Hayashi K."/>
            <person name="Inada T."/>
            <person name="Isono K."/>
            <person name="Kasai H."/>
            <person name="Kimura S."/>
            <person name="Kitakawa M."/>
            <person name="Kitagawa M."/>
            <person name="Makino K."/>
            <person name="Miki T."/>
            <person name="Mizobuchi K."/>
            <person name="Mori H."/>
            <person name="Mori T."/>
            <person name="Motomura K."/>
            <person name="Nakade S."/>
            <person name="Nakamura Y."/>
            <person name="Nashimoto H."/>
            <person name="Nishio Y."/>
            <person name="Oshima T."/>
            <person name="Saito N."/>
            <person name="Sampei G."/>
            <person name="Seki Y."/>
            <person name="Sivasundaram S."/>
            <person name="Tagami H."/>
            <person name="Takeda J."/>
            <person name="Takemoto K."/>
            <person name="Wada C."/>
            <person name="Yamamoto Y."/>
            <person name="Horiuchi T."/>
        </authorList>
    </citation>
    <scope>NUCLEOTIDE SEQUENCE [LARGE SCALE GENOMIC DNA]</scope>
    <source>
        <strain>K12 / W3110 / ATCC 27325 / DSM 5911</strain>
    </source>
</reference>
<reference key="2">
    <citation type="journal article" date="1997" name="Science">
        <title>The complete genome sequence of Escherichia coli K-12.</title>
        <authorList>
            <person name="Blattner F.R."/>
            <person name="Plunkett G. III"/>
            <person name="Bloch C.A."/>
            <person name="Perna N.T."/>
            <person name="Burland V."/>
            <person name="Riley M."/>
            <person name="Collado-Vides J."/>
            <person name="Glasner J.D."/>
            <person name="Rode C.K."/>
            <person name="Mayhew G.F."/>
            <person name="Gregor J."/>
            <person name="Davis N.W."/>
            <person name="Kirkpatrick H.A."/>
            <person name="Goeden M.A."/>
            <person name="Rose D.J."/>
            <person name="Mau B."/>
            <person name="Shao Y."/>
        </authorList>
    </citation>
    <scope>NUCLEOTIDE SEQUENCE [LARGE SCALE GENOMIC DNA]</scope>
    <source>
        <strain>K12 / MG1655 / ATCC 47076</strain>
    </source>
</reference>
<reference key="3">
    <citation type="journal article" date="2006" name="Mol. Syst. Biol.">
        <title>Highly accurate genome sequences of Escherichia coli K-12 strains MG1655 and W3110.</title>
        <authorList>
            <person name="Hayashi K."/>
            <person name="Morooka N."/>
            <person name="Yamamoto Y."/>
            <person name="Fujita K."/>
            <person name="Isono K."/>
            <person name="Choi S."/>
            <person name="Ohtsubo E."/>
            <person name="Baba T."/>
            <person name="Wanner B.L."/>
            <person name="Mori H."/>
            <person name="Horiuchi T."/>
        </authorList>
    </citation>
    <scope>NUCLEOTIDE SEQUENCE [LARGE SCALE GENOMIC DNA]</scope>
    <source>
        <strain>K12 / W3110 / ATCC 27325 / DSM 5911</strain>
    </source>
</reference>
<reference key="4">
    <citation type="journal article" date="2007" name="Genes Genet. Syst.">
        <title>A role of RnlA in the RNase LS activity from Escherichia coli.</title>
        <authorList>
            <person name="Otsuka Y."/>
            <person name="Koga M."/>
            <person name="Iwamoto A."/>
            <person name="Yonesaki T."/>
        </authorList>
    </citation>
    <scope>PROTEIN SEQUENCE OF 1-8</scope>
    <source>
        <strain>K12</strain>
    </source>
</reference>
<reference key="5">
    <citation type="journal article" date="1996" name="J. Bacteriol.">
        <title>Molecular analysis of the gat genes from Escherichia coli and of their roles in galactitol transport and metabolism.</title>
        <authorList>
            <person name="Nobelmann B."/>
            <person name="Lengeler J.W."/>
        </authorList>
    </citation>
    <scope>ROLE IN GALACTITOL CATABOLISM</scope>
    <scope>INDUCTION</scope>
    <source>
        <strain>K12</strain>
    </source>
</reference>
<reference key="6">
    <citation type="journal article" date="2002" name="Arch. Microbiol.">
        <title>Two class II D-tagatose-bisphosphate aldolases from enteric bacteria.</title>
        <authorList>
            <person name="Brinkkoetter A."/>
            <person name="Shakeri-Garakani A."/>
            <person name="Lengeler J.W."/>
        </authorList>
    </citation>
    <scope>FUNCTION AS A TAGBP ALDOLASE COMPONENT</scope>
    <scope>COMPLEX WITH GATY</scope>
    <source>
        <strain>K12</strain>
    </source>
</reference>
<comment type="function">
    <text evidence="1 2">Component of the tagatose-1,6-bisphosphate aldolase GatYZ that is required for full activity and stability of the Y subunit. Could have a chaperone-like function for the proper and stable folding of GatY. When expressed alone, GatZ does not show any aldolase activity. Is involved in the catabolism of galactitol.</text>
</comment>
<comment type="pathway">
    <text>Carbohydrate metabolism; D-tagatose 6-phosphate degradation; D-glyceraldehyde 3-phosphate and glycerone phosphate from D-tagatose 6-phosphate: step 2/2.</text>
</comment>
<comment type="subunit">
    <text>Forms a complex with GatY.</text>
</comment>
<comment type="induction">
    <text evidence="2">Constitutively expressed.</text>
</comment>
<comment type="similarity">
    <text evidence="3">Belongs to the GatZ/KbaZ family. GatZ subfamily.</text>
</comment>
<name>GATZ_ECOLI</name>
<keyword id="KW-0903">Direct protein sequencing</keyword>
<keyword id="KW-0298">Galactitol metabolism</keyword>
<keyword id="KW-1185">Reference proteome</keyword>
<gene>
    <name type="primary">gatZ</name>
    <name type="ordered locus">b2095</name>
    <name type="ordered locus">JW2082</name>
</gene>
<protein>
    <recommendedName>
        <fullName>D-tagatose-1,6-bisphosphate aldolase subunit GatZ</fullName>
    </recommendedName>
</protein>
<proteinExistence type="evidence at protein level"/>
<accession>P0C8J8</accession>
<accession>P37191</accession>
<accession>P76414</accession>
<dbReference type="EMBL" id="U00096">
    <property type="protein sequence ID" value="AAC75156.1"/>
    <property type="molecule type" value="Genomic_DNA"/>
</dbReference>
<dbReference type="EMBL" id="AP009048">
    <property type="protein sequence ID" value="BAA15965.1"/>
    <property type="molecule type" value="Genomic_DNA"/>
</dbReference>
<dbReference type="PIR" id="F64976">
    <property type="entry name" value="F64976"/>
</dbReference>
<dbReference type="PIR" id="S55902">
    <property type="entry name" value="S55902"/>
</dbReference>
<dbReference type="RefSeq" id="NP_416598.1">
    <property type="nucleotide sequence ID" value="NC_000913.3"/>
</dbReference>
<dbReference type="RefSeq" id="WP_000853883.1">
    <property type="nucleotide sequence ID" value="NZ_LN832404.1"/>
</dbReference>
<dbReference type="SMR" id="P0C8J8"/>
<dbReference type="BioGRID" id="4260431">
    <property type="interactions" value="18"/>
</dbReference>
<dbReference type="BioGRID" id="850986">
    <property type="interactions" value="1"/>
</dbReference>
<dbReference type="ComplexPortal" id="CPX-6023">
    <property type="entry name" value="GatYZ tagatose-1,6-bisphosphate aldolase complex"/>
</dbReference>
<dbReference type="DIP" id="DIP-48243N"/>
<dbReference type="FunCoup" id="P0C8J8">
    <property type="interactions" value="216"/>
</dbReference>
<dbReference type="IntAct" id="P0C8J8">
    <property type="interactions" value="17"/>
</dbReference>
<dbReference type="STRING" id="511145.b2095"/>
<dbReference type="jPOST" id="P0C8J8"/>
<dbReference type="PaxDb" id="511145-b2095"/>
<dbReference type="EnsemblBacteria" id="AAC75156">
    <property type="protein sequence ID" value="AAC75156"/>
    <property type="gene ID" value="b2095"/>
</dbReference>
<dbReference type="GeneID" id="946641"/>
<dbReference type="KEGG" id="ecj:JW2082"/>
<dbReference type="KEGG" id="eco:b2095"/>
<dbReference type="PATRIC" id="fig|511145.12.peg.2172"/>
<dbReference type="EchoBASE" id="EB2317"/>
<dbReference type="eggNOG" id="COG4573">
    <property type="taxonomic scope" value="Bacteria"/>
</dbReference>
<dbReference type="HOGENOM" id="CLU_053334_0_0_6"/>
<dbReference type="InParanoid" id="P0C8J8"/>
<dbReference type="OMA" id="AINAVHV"/>
<dbReference type="OrthoDB" id="1672942at2"/>
<dbReference type="PhylomeDB" id="P0C8J8"/>
<dbReference type="BioCyc" id="EcoCyc:G7128-MONOMER"/>
<dbReference type="BioCyc" id="MetaCyc:G7128-MONOMER"/>
<dbReference type="SABIO-RK" id="P0C8J8"/>
<dbReference type="UniPathway" id="UPA00704">
    <property type="reaction ID" value="UER00716"/>
</dbReference>
<dbReference type="PRO" id="PR:P0C8J8"/>
<dbReference type="Proteomes" id="UP000000625">
    <property type="component" value="Chromosome"/>
</dbReference>
<dbReference type="GO" id="GO:1902494">
    <property type="term" value="C:catalytic complex"/>
    <property type="evidence" value="ECO:0000303"/>
    <property type="project" value="ComplexPortal"/>
</dbReference>
<dbReference type="GO" id="GO:0005886">
    <property type="term" value="C:plasma membrane"/>
    <property type="evidence" value="ECO:0000318"/>
    <property type="project" value="GO_Central"/>
</dbReference>
<dbReference type="GO" id="GO:0008047">
    <property type="term" value="F:enzyme activator activity"/>
    <property type="evidence" value="ECO:0000315"/>
    <property type="project" value="EcoCyc"/>
</dbReference>
<dbReference type="GO" id="GO:2001059">
    <property type="term" value="P:D-tagatose 6-phosphate catabolic process"/>
    <property type="evidence" value="ECO:0000303"/>
    <property type="project" value="ComplexPortal"/>
</dbReference>
<dbReference type="GO" id="GO:0019402">
    <property type="term" value="P:galactitol metabolic process"/>
    <property type="evidence" value="ECO:0007669"/>
    <property type="project" value="UniProtKB-KW"/>
</dbReference>
<dbReference type="GO" id="GO:0009401">
    <property type="term" value="P:phosphoenolpyruvate-dependent sugar phosphotransferase system"/>
    <property type="evidence" value="ECO:0000318"/>
    <property type="project" value="GO_Central"/>
</dbReference>
<dbReference type="FunFam" id="3.20.20.70:FF:000141">
    <property type="entry name" value="D-tagatose-1,6-bisphosphate aldolase subunit GatZ"/>
    <property type="match status" value="1"/>
</dbReference>
<dbReference type="Gene3D" id="3.20.20.70">
    <property type="entry name" value="Aldolase class I"/>
    <property type="match status" value="1"/>
</dbReference>
<dbReference type="Gene3D" id="1.10.400.20">
    <property type="entry name" value="putative tagatose 6-phosphate kinase domain like"/>
    <property type="match status" value="1"/>
</dbReference>
<dbReference type="HAMAP" id="MF_01296">
    <property type="entry name" value="Tagatose_aldol_GatZ"/>
    <property type="match status" value="1"/>
</dbReference>
<dbReference type="InterPro" id="IPR013785">
    <property type="entry name" value="Aldolase_TIM"/>
</dbReference>
<dbReference type="InterPro" id="IPR012062">
    <property type="entry name" value="GatZ/KbaZ-like"/>
</dbReference>
<dbReference type="InterPro" id="IPR050303">
    <property type="entry name" value="GatZ_KbaZ_carbometab"/>
</dbReference>
<dbReference type="InterPro" id="IPR023436">
    <property type="entry name" value="TagBP_ald_GatZ"/>
</dbReference>
<dbReference type="NCBIfam" id="TIGR02810">
    <property type="entry name" value="agaZ_gatZ"/>
    <property type="match status" value="1"/>
</dbReference>
<dbReference type="NCBIfam" id="NF011626">
    <property type="entry name" value="PRK15052.1"/>
    <property type="match status" value="1"/>
</dbReference>
<dbReference type="PANTHER" id="PTHR32502:SF12">
    <property type="entry name" value="D-TAGATOSE-1,6-BISPHOSPHATE ALDOLASE SUBUNIT GATZ"/>
    <property type="match status" value="1"/>
</dbReference>
<dbReference type="PANTHER" id="PTHR32502">
    <property type="entry name" value="N-ACETYLGALACTOSAMINE PERMEASE II COMPONENT-RELATED"/>
    <property type="match status" value="1"/>
</dbReference>
<dbReference type="Pfam" id="PF08013">
    <property type="entry name" value="GatZ_KbaZ-like"/>
    <property type="match status" value="1"/>
</dbReference>
<dbReference type="PIRSF" id="PIRSF009264">
    <property type="entry name" value="TagBP_ald_AgaZ"/>
    <property type="match status" value="1"/>
</dbReference>
<dbReference type="SUPFAM" id="SSF51569">
    <property type="entry name" value="Aldolase"/>
    <property type="match status" value="1"/>
</dbReference>
<sequence>MKTLIARHKAGEHIGICSVCSAHPLVIEAALAFDRNSTRKVLIEATSNQVNQFGGYTGMTPADFREFVFTIADKVGFARERIILGGDHLGPNCWQQENADAAMEKSVELVKEYVRAGFSKIHLDASMSCAGDPIPLAPETVAERAAVLCFAAESVATDCQREQLSYVIGTEVPVPGGEASAIQSVHITHVEDAANTLRTHQKAFIARGLTEALTRVIAIVVQPGVEFDHSNIIHYQPQEAQPLAQWIENTRMVYEAHSTDYQTRTAYWELVRDHFAILKVGPALTFALREAIFALAQIEQELIAPENRSGCLAVIEEVMLDEPQYWKKYYRTGFNDSLLDIRYSLSDRIRYYWPHSRIKNSVETMMVNLEGVDIPLGMISQYLPKQFERIQSGELSAIPHQLIMDKIYDVLRAYRYGCAE</sequence>
<feature type="chain" id="PRO_0000087433" description="D-tagatose-1,6-bisphosphate aldolase subunit GatZ">
    <location>
        <begin position="1"/>
        <end position="420"/>
    </location>
</feature>
<evidence type="ECO:0000269" key="1">
    <source>
    </source>
</evidence>
<evidence type="ECO:0000269" key="2">
    <source>
    </source>
</evidence>
<evidence type="ECO:0000305" key="3"/>